<sequence length="356" mass="40659">MSNVSLSASAVSRVMMRVCWLVRQDNRHQRIKLPHLETVMVGRSPETKIADKKCSRQQVQLKAECNKGYVKVKQVGVNPTSIDSVIIGKDQEVKLQPGQVLYLVNELYPYIIEFEEETKSPGLESHRKRKRSGSSDPTERGADPEAEPSTGLEPGSNPHQCSVPPKKEKDASIKKESLGHWSQGLKISMEDPKMQVYKDEQVVVIKDKYPKARFHWLVLPWASISSLKAVTREHLELLRHMHAVGEKVIADFAGSSKFRFRLGYHAIPSMSHVHLHVISQDFDSPCLKNKKHWNSFNTEYFLESQAVIEMVQEAGRVTVRDGMPELLKLPLRCHECQQLLPSIPQLKEHLRKHWSK</sequence>
<accession>Q7YRZ2</accession>
<name>APTX_BOVIN</name>
<gene>
    <name type="primary">APTX</name>
</gene>
<dbReference type="EC" id="3.6.1.71" evidence="3"/>
<dbReference type="EC" id="3.6.1.72" evidence="2"/>
<dbReference type="EMBL" id="AY040778">
    <property type="protein sequence ID" value="AAK91769.1"/>
    <property type="molecule type" value="mRNA"/>
</dbReference>
<dbReference type="RefSeq" id="NP_872595.1">
    <property type="nucleotide sequence ID" value="NM_182654.1"/>
</dbReference>
<dbReference type="SMR" id="Q7YRZ2"/>
<dbReference type="FunCoup" id="Q7YRZ2">
    <property type="interactions" value="3086"/>
</dbReference>
<dbReference type="STRING" id="9913.ENSBTAP00000066152"/>
<dbReference type="PaxDb" id="9913-ENSBTAP00000042890"/>
<dbReference type="GeneID" id="359714"/>
<dbReference type="KEGG" id="bta:359714"/>
<dbReference type="CTD" id="54840"/>
<dbReference type="eggNOG" id="KOG0562">
    <property type="taxonomic scope" value="Eukaryota"/>
</dbReference>
<dbReference type="eggNOG" id="KOG2134">
    <property type="taxonomic scope" value="Eukaryota"/>
</dbReference>
<dbReference type="InParanoid" id="Q7YRZ2"/>
<dbReference type="OrthoDB" id="3512845at2759"/>
<dbReference type="Proteomes" id="UP000009136">
    <property type="component" value="Unplaced"/>
</dbReference>
<dbReference type="GO" id="GO:0005730">
    <property type="term" value="C:nucleolus"/>
    <property type="evidence" value="ECO:0007669"/>
    <property type="project" value="UniProtKB-SubCell"/>
</dbReference>
<dbReference type="GO" id="GO:0005654">
    <property type="term" value="C:nucleoplasm"/>
    <property type="evidence" value="ECO:0007669"/>
    <property type="project" value="UniProtKB-SubCell"/>
</dbReference>
<dbReference type="GO" id="GO:0005634">
    <property type="term" value="C:nucleus"/>
    <property type="evidence" value="ECO:0000318"/>
    <property type="project" value="GO_Central"/>
</dbReference>
<dbReference type="GO" id="GO:0033699">
    <property type="term" value="F:DNA 5'-adenosine monophosphate hydrolase activity"/>
    <property type="evidence" value="ECO:0000318"/>
    <property type="project" value="GO_Central"/>
</dbReference>
<dbReference type="GO" id="GO:0120108">
    <property type="term" value="F:DNA-3'-diphospho-5'-guanosine diphosphatase"/>
    <property type="evidence" value="ECO:0007669"/>
    <property type="project" value="UniProtKB-EC"/>
</dbReference>
<dbReference type="GO" id="GO:0003725">
    <property type="term" value="F:double-stranded RNA binding"/>
    <property type="evidence" value="ECO:0000318"/>
    <property type="project" value="GO_Central"/>
</dbReference>
<dbReference type="GO" id="GO:0030983">
    <property type="term" value="F:mismatched DNA binding"/>
    <property type="evidence" value="ECO:0000318"/>
    <property type="project" value="GO_Central"/>
</dbReference>
<dbReference type="GO" id="GO:1990165">
    <property type="term" value="F:single-strand break-containing DNA binding"/>
    <property type="evidence" value="ECO:0000318"/>
    <property type="project" value="GO_Central"/>
</dbReference>
<dbReference type="GO" id="GO:0003697">
    <property type="term" value="F:single-stranded DNA binding"/>
    <property type="evidence" value="ECO:0000318"/>
    <property type="project" value="GO_Central"/>
</dbReference>
<dbReference type="GO" id="GO:0008270">
    <property type="term" value="F:zinc ion binding"/>
    <property type="evidence" value="ECO:0007669"/>
    <property type="project" value="UniProtKB-KW"/>
</dbReference>
<dbReference type="GO" id="GO:0000012">
    <property type="term" value="P:single strand break repair"/>
    <property type="evidence" value="ECO:0000318"/>
    <property type="project" value="GO_Central"/>
</dbReference>
<dbReference type="CDD" id="cd01278">
    <property type="entry name" value="aprataxin_related"/>
    <property type="match status" value="1"/>
</dbReference>
<dbReference type="CDD" id="cd22735">
    <property type="entry name" value="FHA_APTX"/>
    <property type="match status" value="1"/>
</dbReference>
<dbReference type="FunFam" id="2.60.200.20:FF:000010">
    <property type="entry name" value="aprataxin isoform X1"/>
    <property type="match status" value="1"/>
</dbReference>
<dbReference type="FunFam" id="3.30.428.10:FF:000004">
    <property type="entry name" value="aprataxin isoform X2"/>
    <property type="match status" value="1"/>
</dbReference>
<dbReference type="Gene3D" id="2.60.200.20">
    <property type="match status" value="1"/>
</dbReference>
<dbReference type="Gene3D" id="3.30.428.10">
    <property type="entry name" value="HIT-like"/>
    <property type="match status" value="1"/>
</dbReference>
<dbReference type="InterPro" id="IPR041388">
    <property type="entry name" value="FHA_2"/>
</dbReference>
<dbReference type="InterPro" id="IPR047289">
    <property type="entry name" value="FHA_APTX"/>
</dbReference>
<dbReference type="InterPro" id="IPR019808">
    <property type="entry name" value="Histidine_triad_CS"/>
</dbReference>
<dbReference type="InterPro" id="IPR011146">
    <property type="entry name" value="HIT-like"/>
</dbReference>
<dbReference type="InterPro" id="IPR036265">
    <property type="entry name" value="HIT-like_sf"/>
</dbReference>
<dbReference type="InterPro" id="IPR008984">
    <property type="entry name" value="SMAD_FHA_dom_sf"/>
</dbReference>
<dbReference type="InterPro" id="IPR032566">
    <property type="entry name" value="Znf-C2HE"/>
</dbReference>
<dbReference type="InterPro" id="IPR013087">
    <property type="entry name" value="Znf_C2H2_type"/>
</dbReference>
<dbReference type="PANTHER" id="PTHR12486:SF4">
    <property type="entry name" value="APRATAXIN"/>
    <property type="match status" value="1"/>
</dbReference>
<dbReference type="PANTHER" id="PTHR12486">
    <property type="entry name" value="APRATAXIN-RELATED"/>
    <property type="match status" value="1"/>
</dbReference>
<dbReference type="Pfam" id="PF11969">
    <property type="entry name" value="DcpS_C"/>
    <property type="match status" value="1"/>
</dbReference>
<dbReference type="Pfam" id="PF17913">
    <property type="entry name" value="FHA_2"/>
    <property type="match status" value="1"/>
</dbReference>
<dbReference type="Pfam" id="PF16278">
    <property type="entry name" value="zf-C2HE"/>
    <property type="match status" value="1"/>
</dbReference>
<dbReference type="SUPFAM" id="SSF54197">
    <property type="entry name" value="HIT-like"/>
    <property type="match status" value="1"/>
</dbReference>
<dbReference type="SUPFAM" id="SSF49879">
    <property type="entry name" value="SMAD/FHA domain"/>
    <property type="match status" value="1"/>
</dbReference>
<dbReference type="PROSITE" id="PS00892">
    <property type="entry name" value="HIT_1"/>
    <property type="match status" value="1"/>
</dbReference>
<dbReference type="PROSITE" id="PS51084">
    <property type="entry name" value="HIT_2"/>
    <property type="match status" value="1"/>
</dbReference>
<dbReference type="PROSITE" id="PS00028">
    <property type="entry name" value="ZINC_FINGER_C2H2_1"/>
    <property type="match status" value="1"/>
</dbReference>
<reference key="1">
    <citation type="submission" date="2001-06" db="EMBL/GenBank/DDBJ databases">
        <title>Identification of FHA-HIT as a novel nuclear protein involved in cell-cycle regulation.</title>
        <authorList>
            <person name="Huang C.-H."/>
        </authorList>
    </citation>
    <scope>NUCLEOTIDE SEQUENCE [MRNA]</scope>
</reference>
<comment type="function">
    <text evidence="2 3">DNA-binding protein involved in single-strand DNA break repair, double-strand DNA break repair and base excision repair. Resolves abortive DNA ligation intermediates formed either at base excision sites, or when DNA ligases attempt to repair non-ligatable breaks induced by reactive oxygen species. Catalyzes the release of adenylate groups covalently linked to 5'-phosphate termini, resulting in the production of 5'-phosphate termini that can be efficiently rejoined. Also able to hydrolyze adenosine 5'-monophosphoramidate (AMP-NH(2)) and diadenosine tetraphosphate (AppppA), but with lower catalytic activity (By similarity). Likewise, catalyzes the release of 3'-linked guanosine (DNAppG) and inosine (DNAppI) from DNA, but has higher specific activity with 5'-linked adenosine (AppDNA) (By similarity).</text>
</comment>
<comment type="catalytic activity">
    <reaction evidence="3">
        <text>a 5'-end adenosine-5'-diphospho-5'-2'-deoxyribonucleoside-DNA + H2O = a 5'-end 5'-phospho-2'-deoxyribonucleoside-DNA + AMP + 2 H(+)</text>
        <dbReference type="Rhea" id="RHEA:52128"/>
        <dbReference type="Rhea" id="RHEA-COMP:13180"/>
        <dbReference type="Rhea" id="RHEA-COMP:13181"/>
        <dbReference type="ChEBI" id="CHEBI:15377"/>
        <dbReference type="ChEBI" id="CHEBI:15378"/>
        <dbReference type="ChEBI" id="CHEBI:136412"/>
        <dbReference type="ChEBI" id="CHEBI:136413"/>
        <dbReference type="ChEBI" id="CHEBI:456215"/>
        <dbReference type="EC" id="3.6.1.71"/>
    </reaction>
</comment>
<comment type="catalytic activity">
    <reaction evidence="3">
        <text>a 5'-end adenosine-5'-diphospho-5'-ribonucleoside-2'-deoxyribonucleotide-DNA + H2O = a 5'-end 5'-phospho-ribonucleoside-2'-deoxyribonucleotide-DNA + AMP + 2 H(+)</text>
        <dbReference type="Rhea" id="RHEA:52132"/>
        <dbReference type="Rhea" id="RHEA-COMP:13182"/>
        <dbReference type="Rhea" id="RHEA-COMP:13183"/>
        <dbReference type="ChEBI" id="CHEBI:15377"/>
        <dbReference type="ChEBI" id="CHEBI:15378"/>
        <dbReference type="ChEBI" id="CHEBI:136414"/>
        <dbReference type="ChEBI" id="CHEBI:136415"/>
        <dbReference type="ChEBI" id="CHEBI:456215"/>
        <dbReference type="EC" id="3.6.1.71"/>
    </reaction>
</comment>
<comment type="catalytic activity">
    <reaction evidence="2">
        <text>a 3'-end 2'-deoxyribonucleotide-3'-diphospho-5'-guanosine-DNA + H2O = a 3'-end 2'-deoxyribonucleotide 3'-phosphate-DNA + GMP + 2 H(+)</text>
        <dbReference type="Rhea" id="RHEA:52140"/>
        <dbReference type="Rhea" id="RHEA-COMP:13186"/>
        <dbReference type="Rhea" id="RHEA-COMP:13187"/>
        <dbReference type="ChEBI" id="CHEBI:15377"/>
        <dbReference type="ChEBI" id="CHEBI:15378"/>
        <dbReference type="ChEBI" id="CHEBI:58115"/>
        <dbReference type="ChEBI" id="CHEBI:136419"/>
        <dbReference type="ChEBI" id="CHEBI:136420"/>
        <dbReference type="EC" id="3.6.1.72"/>
    </reaction>
</comment>
<comment type="subunit">
    <text evidence="3">Interacts with single-strand break repair proteins XRCC1, XRCC4, ADPRT/PARP1 and p53/TP53. Interacts with NCL. Interacts (via FHA-like domain) with MDC1 (phosphorylated).</text>
</comment>
<comment type="subcellular location">
    <subcellularLocation>
        <location evidence="3">Nucleus</location>
        <location evidence="3">Nucleoplasm</location>
    </subcellularLocation>
    <subcellularLocation>
        <location evidence="3">Nucleus</location>
        <location evidence="3">Nucleolus</location>
    </subcellularLocation>
    <text evidence="3">Upon genotoxic stress, colocalizes with XRCC1 at sites of DNA damage. Colocalizes with MDC1 at sites of DNA double-strand breaks. Interaction with NCL is required for nucleolar localization (By similarity).</text>
</comment>
<comment type="domain">
    <text evidence="3">The histidine triad, also called HIT motif, forms part of the binding loop for the alpha-phosphate of purine mononucleotide.</text>
</comment>
<comment type="domain">
    <text evidence="1">The FHA-like domain mediates interaction with NCL; XRCC1 and XRCC4.</text>
</comment>
<comment type="domain">
    <text evidence="1">The HIT domain is required for enzymatic activity.</text>
</comment>
<comment type="domain">
    <text evidence="1">The C2H2-type zinc finger mediates DNA-binding.</text>
</comment>
<protein>
    <recommendedName>
        <fullName>Aprataxin</fullName>
        <ecNumber evidence="3">3.6.1.71</ecNumber>
        <ecNumber evidence="2">3.6.1.72</ecNumber>
    </recommendedName>
    <alternativeName>
        <fullName>Forkhead-associated domain histidine triad-like protein</fullName>
        <shortName>FHA-HIT</shortName>
    </alternativeName>
</protein>
<organism>
    <name type="scientific">Bos taurus</name>
    <name type="common">Bovine</name>
    <dbReference type="NCBI Taxonomy" id="9913"/>
    <lineage>
        <taxon>Eukaryota</taxon>
        <taxon>Metazoa</taxon>
        <taxon>Chordata</taxon>
        <taxon>Craniata</taxon>
        <taxon>Vertebrata</taxon>
        <taxon>Euteleostomi</taxon>
        <taxon>Mammalia</taxon>
        <taxon>Eutheria</taxon>
        <taxon>Laurasiatheria</taxon>
        <taxon>Artiodactyla</taxon>
        <taxon>Ruminantia</taxon>
        <taxon>Pecora</taxon>
        <taxon>Bovidae</taxon>
        <taxon>Bovinae</taxon>
        <taxon>Bos</taxon>
    </lineage>
</organism>
<keyword id="KW-0227">DNA damage</keyword>
<keyword id="KW-0234">DNA repair</keyword>
<keyword id="KW-0238">DNA-binding</keyword>
<keyword id="KW-0378">Hydrolase</keyword>
<keyword id="KW-0479">Metal-binding</keyword>
<keyword id="KW-0539">Nucleus</keyword>
<keyword id="KW-0597">Phosphoprotein</keyword>
<keyword id="KW-1185">Reference proteome</keyword>
<keyword id="KW-0862">Zinc</keyword>
<keyword id="KW-0863">Zinc-finger</keyword>
<evidence type="ECO:0000250" key="1"/>
<evidence type="ECO:0000250" key="2">
    <source>
        <dbReference type="UniProtKB" id="O74859"/>
    </source>
</evidence>
<evidence type="ECO:0000250" key="3">
    <source>
        <dbReference type="UniProtKB" id="Q7Z2E3"/>
    </source>
</evidence>
<evidence type="ECO:0000255" key="4">
    <source>
        <dbReference type="PROSITE-ProRule" id="PRU00464"/>
    </source>
</evidence>
<evidence type="ECO:0000256" key="5">
    <source>
        <dbReference type="SAM" id="MobiDB-lite"/>
    </source>
</evidence>
<proteinExistence type="evidence at transcript level"/>
<feature type="chain" id="PRO_0000109836" description="Aprataxin">
    <location>
        <begin position="1"/>
        <end position="356"/>
    </location>
</feature>
<feature type="domain" description="FHA-like">
    <location>
        <begin position="38"/>
        <end position="87"/>
    </location>
</feature>
<feature type="domain" description="HIT" evidence="4">
    <location>
        <begin position="182"/>
        <end position="287"/>
    </location>
</feature>
<feature type="zinc finger region" description="C2H2-type">
    <location>
        <begin position="331"/>
        <end position="353"/>
    </location>
</feature>
<feature type="region of interest" description="Interactions with ADPRT/PARP1 and NCL" evidence="1">
    <location>
        <begin position="1"/>
        <end position="110"/>
    </location>
</feature>
<feature type="region of interest" description="Disordered" evidence="5">
    <location>
        <begin position="121"/>
        <end position="175"/>
    </location>
</feature>
<feature type="region of interest" description="Interaction with DNA substrate" evidence="3">
    <location>
        <begin position="207"/>
        <end position="211"/>
    </location>
</feature>
<feature type="region of interest" description="Interaction with DNA substrate" evidence="3">
    <location>
        <begin position="269"/>
        <end position="270"/>
    </location>
</feature>
<feature type="short sequence motif" description="Nuclear localization signal" evidence="1">
    <location>
        <begin position="126"/>
        <end position="131"/>
    </location>
</feature>
<feature type="short sequence motif" description="Histidine triad motif" evidence="4">
    <location>
        <begin position="272"/>
        <end position="276"/>
    </location>
</feature>
<feature type="compositionally biased region" description="Basic and acidic residues" evidence="5">
    <location>
        <begin position="165"/>
        <end position="175"/>
    </location>
</feature>
<feature type="active site" description="Tele-AMP-histidine intermediate" evidence="3">
    <location>
        <position position="274"/>
    </location>
</feature>
<feature type="site" description="Interaction with DNA substrate" evidence="3">
    <location>
        <position position="188"/>
    </location>
</feature>
<feature type="site" description="Interaction with DNA substrate" evidence="3">
    <location>
        <position position="265"/>
    </location>
</feature>
<feature type="site" description="Interaction with DNA substrate" evidence="3">
    <location>
        <position position="276"/>
    </location>
</feature>
<feature type="site" description="Interaction with DNA substrate" evidence="3">
    <location>
        <position position="291"/>
    </location>
</feature>
<feature type="modified residue" description="Phosphoserine" evidence="3">
    <location>
        <position position="132"/>
    </location>
</feature>